<gene>
    <name type="primary">TRIP10</name>
    <name type="synonym">CIP4</name>
    <name type="synonym">STOT</name>
    <name type="synonym">STP</name>
</gene>
<evidence type="ECO:0000250" key="1"/>
<evidence type="ECO:0000255" key="2">
    <source>
        <dbReference type="PROSITE-ProRule" id="PRU00192"/>
    </source>
</evidence>
<evidence type="ECO:0000255" key="3">
    <source>
        <dbReference type="PROSITE-ProRule" id="PRU01077"/>
    </source>
</evidence>
<evidence type="ECO:0000255" key="4">
    <source>
        <dbReference type="PROSITE-ProRule" id="PRU01207"/>
    </source>
</evidence>
<evidence type="ECO:0000256" key="5">
    <source>
        <dbReference type="SAM" id="MobiDB-lite"/>
    </source>
</evidence>
<evidence type="ECO:0000269" key="6">
    <source>
    </source>
</evidence>
<evidence type="ECO:0000269" key="7">
    <source>
    </source>
</evidence>
<evidence type="ECO:0000269" key="8">
    <source>
    </source>
</evidence>
<evidence type="ECO:0000269" key="9">
    <source>
    </source>
</evidence>
<evidence type="ECO:0000269" key="10">
    <source>
    </source>
</evidence>
<evidence type="ECO:0000269" key="11">
    <source>
    </source>
</evidence>
<evidence type="ECO:0000269" key="12">
    <source>
    </source>
</evidence>
<evidence type="ECO:0000269" key="13">
    <source>
    </source>
</evidence>
<evidence type="ECO:0000269" key="14">
    <source>
    </source>
</evidence>
<evidence type="ECO:0000269" key="15">
    <source>
    </source>
</evidence>
<evidence type="ECO:0000269" key="16">
    <source>
    </source>
</evidence>
<evidence type="ECO:0000269" key="17">
    <source>
    </source>
</evidence>
<evidence type="ECO:0000269" key="18">
    <source>
    </source>
</evidence>
<evidence type="ECO:0000269" key="19">
    <source>
    </source>
</evidence>
<evidence type="ECO:0000269" key="20">
    <source>
    </source>
</evidence>
<evidence type="ECO:0000303" key="21">
    <source>
    </source>
</evidence>
<evidence type="ECO:0000303" key="22">
    <source>
    </source>
</evidence>
<evidence type="ECO:0000303" key="23">
    <source>
    </source>
</evidence>
<evidence type="ECO:0000303" key="24">
    <source>
    </source>
</evidence>
<evidence type="ECO:0000303" key="25">
    <source>
    </source>
</evidence>
<evidence type="ECO:0000303" key="26">
    <source ref="5"/>
</evidence>
<evidence type="ECO:0000303" key="27">
    <source ref="6"/>
</evidence>
<evidence type="ECO:0000303" key="28">
    <source ref="8"/>
</evidence>
<evidence type="ECO:0000305" key="29"/>
<evidence type="ECO:0007744" key="30">
    <source>
    </source>
</evidence>
<evidence type="ECO:0007744" key="31">
    <source>
    </source>
</evidence>
<evidence type="ECO:0007744" key="32">
    <source>
    </source>
</evidence>
<evidence type="ECO:0007744" key="33">
    <source>
    </source>
</evidence>
<evidence type="ECO:0007744" key="34">
    <source>
    </source>
</evidence>
<evidence type="ECO:0007829" key="35">
    <source>
        <dbReference type="PDB" id="2CT4"/>
    </source>
</evidence>
<evidence type="ECO:0007829" key="36">
    <source>
        <dbReference type="PDB" id="2EFK"/>
    </source>
</evidence>
<evidence type="ECO:0007829" key="37">
    <source>
        <dbReference type="PDB" id="2KE4"/>
    </source>
</evidence>
<dbReference type="EMBL" id="AJ000414">
    <property type="protein sequence ID" value="CAA04062.1"/>
    <property type="molecule type" value="mRNA"/>
</dbReference>
<dbReference type="EMBL" id="AF380114">
    <property type="protein sequence ID" value="AAK77492.1"/>
    <property type="molecule type" value="mRNA"/>
</dbReference>
<dbReference type="EMBL" id="AY081141">
    <property type="protein sequence ID" value="AAL89588.1"/>
    <property type="molecule type" value="mRNA"/>
</dbReference>
<dbReference type="EMBL" id="AB072596">
    <property type="protein sequence ID" value="BAB88853.1"/>
    <property type="molecule type" value="mRNA"/>
</dbReference>
<dbReference type="EMBL" id="AF502289">
    <property type="protein sequence ID" value="AAM46851.1"/>
    <property type="molecule type" value="mRNA"/>
</dbReference>
<dbReference type="EMBL" id="CR536513">
    <property type="protein sequence ID" value="CAG38751.1"/>
    <property type="molecule type" value="mRNA"/>
</dbReference>
<dbReference type="EMBL" id="BT006698">
    <property type="protein sequence ID" value="AAP35344.1"/>
    <property type="molecule type" value="mRNA"/>
</dbReference>
<dbReference type="EMBL" id="BT020167">
    <property type="protein sequence ID" value="AAV38969.1"/>
    <property type="molecule type" value="mRNA"/>
</dbReference>
<dbReference type="EMBL" id="BT020171">
    <property type="protein sequence ID" value="AAV43773.1"/>
    <property type="molecule type" value="mRNA"/>
</dbReference>
<dbReference type="EMBL" id="AK223109">
    <property type="protein sequence ID" value="BAD96829.1"/>
    <property type="molecule type" value="mRNA"/>
</dbReference>
<dbReference type="EMBL" id="AK313296">
    <property type="protein sequence ID" value="BAG36103.1"/>
    <property type="molecule type" value="mRNA"/>
</dbReference>
<dbReference type="EMBL" id="AC008760">
    <property type="status" value="NOT_ANNOTATED_CDS"/>
    <property type="molecule type" value="Genomic_DNA"/>
</dbReference>
<dbReference type="EMBL" id="CH471139">
    <property type="protein sequence ID" value="EAW69065.1"/>
    <property type="molecule type" value="Genomic_DNA"/>
</dbReference>
<dbReference type="EMBL" id="CH471139">
    <property type="protein sequence ID" value="EAW69062.1"/>
    <property type="molecule type" value="Genomic_DNA"/>
</dbReference>
<dbReference type="EMBL" id="CH471139">
    <property type="protein sequence ID" value="EAW69063.1"/>
    <property type="molecule type" value="Genomic_DNA"/>
</dbReference>
<dbReference type="EMBL" id="BC013002">
    <property type="protein sequence ID" value="AAH13002.1"/>
    <property type="molecule type" value="mRNA"/>
</dbReference>
<dbReference type="EMBL" id="L40379">
    <property type="protein sequence ID" value="AAC41729.1"/>
    <property type="molecule type" value="mRNA"/>
</dbReference>
<dbReference type="CCDS" id="CCDS12172.1">
    <molecule id="Q15642-2"/>
</dbReference>
<dbReference type="CCDS" id="CCDS74271.1">
    <molecule id="Q15642-1"/>
</dbReference>
<dbReference type="CCDS" id="CCDS74272.1">
    <molecule id="Q15642-3"/>
</dbReference>
<dbReference type="RefSeq" id="NP_001275891.1">
    <molecule id="Q15642-1"/>
    <property type="nucleotide sequence ID" value="NM_001288962.2"/>
</dbReference>
<dbReference type="RefSeq" id="NP_001275892.1">
    <property type="nucleotide sequence ID" value="NM_001288963.1"/>
</dbReference>
<dbReference type="RefSeq" id="NP_004231.1">
    <molecule id="Q15642-2"/>
    <property type="nucleotide sequence ID" value="NM_004240.4"/>
</dbReference>
<dbReference type="PDB" id="2CT4">
    <property type="method" value="NMR"/>
    <property type="chains" value="A=543-599"/>
</dbReference>
<dbReference type="PDB" id="2EFK">
    <property type="method" value="X-ray"/>
    <property type="resolution" value="2.30 A"/>
    <property type="chains" value="A=10-303"/>
</dbReference>
<dbReference type="PDB" id="2KE4">
    <property type="method" value="NMR"/>
    <property type="chains" value="A=388-481"/>
</dbReference>
<dbReference type="PDBsum" id="2CT4"/>
<dbReference type="PDBsum" id="2EFK"/>
<dbReference type="PDBsum" id="2KE4"/>
<dbReference type="BMRB" id="Q15642"/>
<dbReference type="SMR" id="Q15642"/>
<dbReference type="BioGRID" id="114733">
    <property type="interactions" value="127"/>
</dbReference>
<dbReference type="DIP" id="DIP-39840N"/>
<dbReference type="FunCoup" id="Q15642">
    <property type="interactions" value="2224"/>
</dbReference>
<dbReference type="IntAct" id="Q15642">
    <property type="interactions" value="68"/>
</dbReference>
<dbReference type="MINT" id="Q15642"/>
<dbReference type="STRING" id="9606.ENSP00000320117"/>
<dbReference type="GlyGen" id="Q15642">
    <property type="glycosylation" value="2 sites, 1 O-linked glycan (1 site)"/>
</dbReference>
<dbReference type="iPTMnet" id="Q15642"/>
<dbReference type="MetOSite" id="Q15642"/>
<dbReference type="PhosphoSitePlus" id="Q15642"/>
<dbReference type="BioMuta" id="TRIP10"/>
<dbReference type="DMDM" id="118572632"/>
<dbReference type="jPOST" id="Q15642"/>
<dbReference type="MassIVE" id="Q15642"/>
<dbReference type="PaxDb" id="9606-ENSP00000320117"/>
<dbReference type="PeptideAtlas" id="Q15642"/>
<dbReference type="ProteomicsDB" id="60675">
    <molecule id="Q15642-1"/>
</dbReference>
<dbReference type="ProteomicsDB" id="60676">
    <molecule id="Q15642-2"/>
</dbReference>
<dbReference type="ProteomicsDB" id="60677">
    <molecule id="Q15642-3"/>
</dbReference>
<dbReference type="ProteomicsDB" id="60678">
    <molecule id="Q15642-4"/>
</dbReference>
<dbReference type="ProteomicsDB" id="60679">
    <molecule id="Q15642-5"/>
</dbReference>
<dbReference type="Pumba" id="Q15642"/>
<dbReference type="Antibodypedia" id="11922">
    <property type="antibodies" value="271 antibodies from 34 providers"/>
</dbReference>
<dbReference type="DNASU" id="9322"/>
<dbReference type="Ensembl" id="ENST00000313244.14">
    <molecule id="Q15642-1"/>
    <property type="protein sequence ID" value="ENSP00000320117.7"/>
    <property type="gene ID" value="ENSG00000125733.18"/>
</dbReference>
<dbReference type="Ensembl" id="ENST00000313285.12">
    <molecule id="Q15642-2"/>
    <property type="protein sequence ID" value="ENSP00000320493.6"/>
    <property type="gene ID" value="ENSG00000125733.18"/>
</dbReference>
<dbReference type="GeneID" id="9322"/>
<dbReference type="KEGG" id="hsa:9322"/>
<dbReference type="MANE-Select" id="ENST00000313244.14">
    <property type="protein sequence ID" value="ENSP00000320117.7"/>
    <property type="RefSeq nucleotide sequence ID" value="NM_001288962.2"/>
    <property type="RefSeq protein sequence ID" value="NP_001275891.1"/>
</dbReference>
<dbReference type="UCSC" id="uc002mfr.5">
    <molecule id="Q15642-1"/>
    <property type="organism name" value="human"/>
</dbReference>
<dbReference type="AGR" id="HGNC:12304"/>
<dbReference type="CTD" id="9322"/>
<dbReference type="DisGeNET" id="9322"/>
<dbReference type="GeneCards" id="TRIP10"/>
<dbReference type="HGNC" id="HGNC:12304">
    <property type="gene designation" value="TRIP10"/>
</dbReference>
<dbReference type="HPA" id="ENSG00000125733">
    <property type="expression patterns" value="Tissue enhanced (skeletal)"/>
</dbReference>
<dbReference type="MIM" id="604504">
    <property type="type" value="gene"/>
</dbReference>
<dbReference type="neXtProt" id="NX_Q15642"/>
<dbReference type="OpenTargets" id="ENSG00000125733"/>
<dbReference type="PharmGKB" id="PA36983"/>
<dbReference type="VEuPathDB" id="HostDB:ENSG00000125733"/>
<dbReference type="eggNOG" id="KOG3565">
    <property type="taxonomic scope" value="Eukaryota"/>
</dbReference>
<dbReference type="GeneTree" id="ENSGT00950000183047"/>
<dbReference type="HOGENOM" id="CLU_023320_1_0_1"/>
<dbReference type="InParanoid" id="Q15642"/>
<dbReference type="OMA" id="PTSYVKI"/>
<dbReference type="OrthoDB" id="8783038at2759"/>
<dbReference type="PAN-GO" id="Q15642">
    <property type="GO annotations" value="0 GO annotations based on evolutionary models"/>
</dbReference>
<dbReference type="PhylomeDB" id="Q15642"/>
<dbReference type="TreeFam" id="TF351162"/>
<dbReference type="PathwayCommons" id="Q15642"/>
<dbReference type="Reactome" id="R-HSA-8856828">
    <property type="pathway name" value="Clathrin-mediated endocytosis"/>
</dbReference>
<dbReference type="Reactome" id="R-HSA-9013406">
    <property type="pathway name" value="RHOQ GTPase cycle"/>
</dbReference>
<dbReference type="SignaLink" id="Q15642"/>
<dbReference type="SIGNOR" id="Q15642"/>
<dbReference type="BioGRID-ORCS" id="9322">
    <property type="hits" value="9 hits in 1154 CRISPR screens"/>
</dbReference>
<dbReference type="CD-CODE" id="8C2F96ED">
    <property type="entry name" value="Centrosome"/>
</dbReference>
<dbReference type="ChiTaRS" id="TRIP10">
    <property type="organism name" value="human"/>
</dbReference>
<dbReference type="EvolutionaryTrace" id="Q15642"/>
<dbReference type="GeneWiki" id="TRIP10"/>
<dbReference type="GenomeRNAi" id="9322"/>
<dbReference type="Pharos" id="Q15642">
    <property type="development level" value="Tbio"/>
</dbReference>
<dbReference type="PRO" id="PR:Q15642"/>
<dbReference type="Proteomes" id="UP000005640">
    <property type="component" value="Chromosome 19"/>
</dbReference>
<dbReference type="RNAct" id="Q15642">
    <property type="molecule type" value="protein"/>
</dbReference>
<dbReference type="Bgee" id="ENSG00000125733">
    <property type="expression patterns" value="Expressed in lower esophagus mucosa and 177 other cell types or tissues"/>
</dbReference>
<dbReference type="ExpressionAtlas" id="Q15642">
    <property type="expression patterns" value="baseline and differential"/>
</dbReference>
<dbReference type="GO" id="GO:0005938">
    <property type="term" value="C:cell cortex"/>
    <property type="evidence" value="ECO:0007669"/>
    <property type="project" value="UniProtKB-SubCell"/>
</dbReference>
<dbReference type="GO" id="GO:0042995">
    <property type="term" value="C:cell projection"/>
    <property type="evidence" value="ECO:0007669"/>
    <property type="project" value="UniProtKB-KW"/>
</dbReference>
<dbReference type="GO" id="GO:0005737">
    <property type="term" value="C:cytoplasm"/>
    <property type="evidence" value="ECO:0000303"/>
    <property type="project" value="UniProtKB"/>
</dbReference>
<dbReference type="GO" id="GO:0005856">
    <property type="term" value="C:cytoskeleton"/>
    <property type="evidence" value="ECO:0007669"/>
    <property type="project" value="UniProtKB-SubCell"/>
</dbReference>
<dbReference type="GO" id="GO:0005829">
    <property type="term" value="C:cytosol"/>
    <property type="evidence" value="ECO:0000304"/>
    <property type="project" value="Reactome"/>
</dbReference>
<dbReference type="GO" id="GO:0070062">
    <property type="term" value="C:extracellular exosome"/>
    <property type="evidence" value="ECO:0007005"/>
    <property type="project" value="UniProtKB"/>
</dbReference>
<dbReference type="GO" id="GO:0005794">
    <property type="term" value="C:Golgi apparatus"/>
    <property type="evidence" value="ECO:0007669"/>
    <property type="project" value="UniProtKB-SubCell"/>
</dbReference>
<dbReference type="GO" id="GO:0043231">
    <property type="term" value="C:intracellular membrane-bounded organelle"/>
    <property type="evidence" value="ECO:0000314"/>
    <property type="project" value="HPA"/>
</dbReference>
<dbReference type="GO" id="GO:0005764">
    <property type="term" value="C:lysosome"/>
    <property type="evidence" value="ECO:0007669"/>
    <property type="project" value="UniProtKB-SubCell"/>
</dbReference>
<dbReference type="GO" id="GO:0005654">
    <property type="term" value="C:nucleoplasm"/>
    <property type="evidence" value="ECO:0000314"/>
    <property type="project" value="HPA"/>
</dbReference>
<dbReference type="GO" id="GO:0048471">
    <property type="term" value="C:perinuclear region of cytoplasm"/>
    <property type="evidence" value="ECO:0007669"/>
    <property type="project" value="UniProtKB-SubCell"/>
</dbReference>
<dbReference type="GO" id="GO:0001891">
    <property type="term" value="C:phagocytic cup"/>
    <property type="evidence" value="ECO:0007669"/>
    <property type="project" value="UniProtKB-SubCell"/>
</dbReference>
<dbReference type="GO" id="GO:0042802">
    <property type="term" value="F:identical protein binding"/>
    <property type="evidence" value="ECO:0000353"/>
    <property type="project" value="IntAct"/>
</dbReference>
<dbReference type="GO" id="GO:0008289">
    <property type="term" value="F:lipid binding"/>
    <property type="evidence" value="ECO:0007669"/>
    <property type="project" value="UniProtKB-KW"/>
</dbReference>
<dbReference type="GO" id="GO:0030036">
    <property type="term" value="P:actin cytoskeleton organization"/>
    <property type="evidence" value="ECO:0000303"/>
    <property type="project" value="UniProtKB"/>
</dbReference>
<dbReference type="GO" id="GO:0007154">
    <property type="term" value="P:cell communication"/>
    <property type="evidence" value="ECO:0000303"/>
    <property type="project" value="UniProtKB"/>
</dbReference>
<dbReference type="GO" id="GO:0006897">
    <property type="term" value="P:endocytosis"/>
    <property type="evidence" value="ECO:0007669"/>
    <property type="project" value="UniProtKB-KW"/>
</dbReference>
<dbReference type="GO" id="GO:0007165">
    <property type="term" value="P:signal transduction"/>
    <property type="evidence" value="ECO:0000304"/>
    <property type="project" value="ProtInc"/>
</dbReference>
<dbReference type="CDD" id="cd07653">
    <property type="entry name" value="F-BAR_CIP4-like"/>
    <property type="match status" value="1"/>
</dbReference>
<dbReference type="CDD" id="cd11628">
    <property type="entry name" value="HR1_CIP4_FNBP1L"/>
    <property type="match status" value="1"/>
</dbReference>
<dbReference type="CDD" id="cd11911">
    <property type="entry name" value="SH3_CIP4-like"/>
    <property type="match status" value="1"/>
</dbReference>
<dbReference type="DisProt" id="DP02473"/>
<dbReference type="FunFam" id="1.20.1270.60:FF:000002">
    <property type="entry name" value="Formin-binding protein 1-like isoform 1"/>
    <property type="match status" value="1"/>
</dbReference>
<dbReference type="FunFam" id="2.30.30.40:FF:000017">
    <property type="entry name" value="Formin-binding protein 1-like isoform 1"/>
    <property type="match status" value="1"/>
</dbReference>
<dbReference type="Gene3D" id="6.10.140.470">
    <property type="match status" value="1"/>
</dbReference>
<dbReference type="Gene3D" id="1.20.1270.60">
    <property type="entry name" value="Arfaptin homology (AH) domain/BAR domain"/>
    <property type="match status" value="1"/>
</dbReference>
<dbReference type="Gene3D" id="2.30.30.40">
    <property type="entry name" value="SH3 Domains"/>
    <property type="match status" value="1"/>
</dbReference>
<dbReference type="InterPro" id="IPR027267">
    <property type="entry name" value="AH/BAR_dom_sf"/>
</dbReference>
<dbReference type="InterPro" id="IPR031160">
    <property type="entry name" value="F_BAR"/>
</dbReference>
<dbReference type="InterPro" id="IPR001060">
    <property type="entry name" value="FCH_dom"/>
</dbReference>
<dbReference type="InterPro" id="IPR011072">
    <property type="entry name" value="HR1_rho-bd"/>
</dbReference>
<dbReference type="InterPro" id="IPR036028">
    <property type="entry name" value="SH3-like_dom_sf"/>
</dbReference>
<dbReference type="InterPro" id="IPR001452">
    <property type="entry name" value="SH3_domain"/>
</dbReference>
<dbReference type="PANTHER" id="PTHR15735:SF17">
    <property type="entry name" value="CDC42-INTERACTING PROTEIN 4"/>
    <property type="match status" value="1"/>
</dbReference>
<dbReference type="PANTHER" id="PTHR15735">
    <property type="entry name" value="FCH AND DOUBLE SH3 DOMAINS PROTEIN"/>
    <property type="match status" value="1"/>
</dbReference>
<dbReference type="Pfam" id="PF00611">
    <property type="entry name" value="FCH"/>
    <property type="match status" value="1"/>
</dbReference>
<dbReference type="Pfam" id="PF00018">
    <property type="entry name" value="SH3_1"/>
    <property type="match status" value="1"/>
</dbReference>
<dbReference type="SMART" id="SM00055">
    <property type="entry name" value="FCH"/>
    <property type="match status" value="1"/>
</dbReference>
<dbReference type="SMART" id="SM00326">
    <property type="entry name" value="SH3"/>
    <property type="match status" value="1"/>
</dbReference>
<dbReference type="SUPFAM" id="SSF103657">
    <property type="entry name" value="BAR/IMD domain-like"/>
    <property type="match status" value="1"/>
</dbReference>
<dbReference type="SUPFAM" id="SSF50044">
    <property type="entry name" value="SH3-domain"/>
    <property type="match status" value="1"/>
</dbReference>
<dbReference type="PROSITE" id="PS51741">
    <property type="entry name" value="F_BAR"/>
    <property type="match status" value="1"/>
</dbReference>
<dbReference type="PROSITE" id="PS51860">
    <property type="entry name" value="REM_1"/>
    <property type="match status" value="1"/>
</dbReference>
<dbReference type="PROSITE" id="PS50002">
    <property type="entry name" value="SH3"/>
    <property type="match status" value="1"/>
</dbReference>
<feature type="chain" id="PRO_0000089766" description="Cdc42-interacting protein 4">
    <location>
        <begin position="1"/>
        <end position="601"/>
    </location>
</feature>
<feature type="domain" description="F-BAR" evidence="3">
    <location>
        <begin position="1"/>
        <end position="264"/>
    </location>
</feature>
<feature type="domain" description="REM-1" evidence="4">
    <location>
        <begin position="393"/>
        <end position="470"/>
    </location>
</feature>
<feature type="domain" description="SH3" evidence="2">
    <location>
        <begin position="540"/>
        <end position="601"/>
    </location>
</feature>
<feature type="region of interest" description="Required for podosome formation and interaction with AKAP9 and microtubules" evidence="14">
    <location>
        <begin position="1"/>
        <end position="117"/>
    </location>
</feature>
<feature type="region of interest" description="Required for translocation to the plasma membrane in response to insulin" evidence="1">
    <location>
        <begin position="1"/>
        <end position="117"/>
    </location>
</feature>
<feature type="region of interest" description="Disordered" evidence="5">
    <location>
        <begin position="280"/>
        <end position="358"/>
    </location>
</feature>
<feature type="region of interest" description="Interaction with PDE6G" evidence="1">
    <location>
        <begin position="293"/>
        <end position="601"/>
    </location>
</feature>
<feature type="region of interest" description="Interaction with CDC42">
    <location>
        <begin position="293"/>
        <end position="537"/>
    </location>
</feature>
<feature type="region of interest" description="Disordered" evidence="5">
    <location>
        <begin position="390"/>
        <end position="420"/>
    </location>
</feature>
<feature type="region of interest" description="Required for interaction with FASLG and localization to lysosomes" evidence="15">
    <location>
        <begin position="471"/>
        <end position="601"/>
    </location>
</feature>
<feature type="region of interest" description="Disordered" evidence="5">
    <location>
        <begin position="479"/>
        <end position="543"/>
    </location>
</feature>
<feature type="region of interest" description="Interaction with DNM2 and WASL" evidence="1">
    <location>
        <begin position="487"/>
        <end position="541"/>
    </location>
</feature>
<feature type="region of interest" description="Interaction with DNM1 and WASL" evidence="16">
    <location>
        <begin position="529"/>
        <end position="601"/>
    </location>
</feature>
<feature type="region of interest" description="Required for podosome formation">
    <location>
        <begin position="538"/>
        <end position="601"/>
    </location>
</feature>
<feature type="region of interest" description="Interaction with WAS" evidence="6">
    <location>
        <begin position="544"/>
        <end position="601"/>
    </location>
</feature>
<feature type="region of interest" description="Interaction with ARHGAP17, DAAM1, DIAPH1 and DIAPH2" evidence="9 18">
    <location>
        <begin position="546"/>
        <end position="601"/>
    </location>
</feature>
<feature type="coiled-coil region">
    <location>
        <begin position="67"/>
        <end position="259"/>
    </location>
</feature>
<feature type="coiled-coil region">
    <location>
        <begin position="388"/>
        <end position="481"/>
    </location>
</feature>
<feature type="compositionally biased region" description="Polar residues" evidence="5">
    <location>
        <begin position="289"/>
        <end position="302"/>
    </location>
</feature>
<feature type="compositionally biased region" description="Basic residues" evidence="5">
    <location>
        <begin position="314"/>
        <end position="329"/>
    </location>
</feature>
<feature type="compositionally biased region" description="Low complexity" evidence="5">
    <location>
        <begin position="336"/>
        <end position="346"/>
    </location>
</feature>
<feature type="compositionally biased region" description="Basic and acidic residues" evidence="5">
    <location>
        <begin position="407"/>
        <end position="420"/>
    </location>
</feature>
<feature type="compositionally biased region" description="Low complexity" evidence="5">
    <location>
        <begin position="497"/>
        <end position="506"/>
    </location>
</feature>
<feature type="compositionally biased region" description="Acidic residues" evidence="5">
    <location>
        <begin position="529"/>
        <end position="538"/>
    </location>
</feature>
<feature type="site" description="Mediates end-to-end attachment of dimers">
    <location>
        <position position="166"/>
    </location>
</feature>
<feature type="modified residue" description="Phosphoserine" evidence="30 31 32 33 34">
    <location>
        <position position="296"/>
    </location>
</feature>
<feature type="modified residue" description="Phosphoserine" evidence="34">
    <location>
        <position position="298"/>
    </location>
</feature>
<feature type="modified residue" description="Phosphoserine" evidence="30 33">
    <location>
        <position position="299"/>
    </location>
</feature>
<feature type="modified residue" description="Phosphoserine" evidence="30 31">
    <location>
        <position position="335"/>
    </location>
</feature>
<feature type="modified residue" description="Phosphoserine" evidence="30 31">
    <location>
        <position position="351"/>
    </location>
</feature>
<feature type="modified residue" description="Phosphoserine" evidence="31 33">
    <location>
        <position position="482"/>
    </location>
</feature>
<feature type="splice variant" id="VSP_021716" description="In isoform 2, isoform 3 and isoform 4." evidence="21 22 23 25 26 27 28">
    <location>
        <begin position="329"/>
        <end position="384"/>
    </location>
</feature>
<feature type="splice variant" id="VSP_021717" description="In isoform 5." evidence="24">
    <original>RPPPLSPLGGPV</original>
    <variation>SRQPWDSGDRGF</variation>
    <location>
        <begin position="330"/>
        <end position="341"/>
    </location>
</feature>
<feature type="splice variant" id="VSP_021718" description="In isoform 5." evidence="24">
    <location>
        <begin position="342"/>
        <end position="601"/>
    </location>
</feature>
<feature type="splice variant" id="VSP_021719" description="In isoform 4." evidence="21">
    <original>S</original>
    <variation>R</variation>
    <location>
        <position position="512"/>
    </location>
</feature>
<feature type="splice variant" id="VSP_021720" description="In isoform 4." evidence="21">
    <location>
        <begin position="513"/>
        <end position="601"/>
    </location>
</feature>
<feature type="splice variant" id="VSP_021721" description="In isoform 3." evidence="21">
    <original>GSSEGTISMAEGEDLSLMEEDKGDGWTRVRRKEGGEGYVPTSYLRVTLN</original>
    <variation>DLGPPPPPSQGPARALSLWPRVKTSVLWKKTKGTAGPGSGGKREARATCPPPTSESRSIEPCQRREEGGCRLLLLGHGGSQDLGTLFLTPWLRLRPV</variation>
    <location>
        <begin position="553"/>
        <end position="601"/>
    </location>
</feature>
<feature type="mutagenesis site" description="Abrogates interaction with CDC42." evidence="6">
    <original>I</original>
    <variation>S</variation>
    <location>
        <position position="454"/>
    </location>
</feature>
<feature type="mutagenesis site" description="Impairs interaction with CDC42." evidence="6">
    <original>L</original>
    <variation>S</variation>
    <location>
        <position position="468"/>
    </location>
</feature>
<feature type="sequence conflict" description="In Ref. 2; AAK77492." evidence="29" ref="2">
    <original>L</original>
    <variation>P</variation>
    <location>
        <position position="158"/>
    </location>
</feature>
<feature type="sequence conflict" description="In Ref. 2; AAK77492." evidence="29" ref="2">
    <original>L</original>
    <variation>P</variation>
    <location>
        <position position="310"/>
    </location>
</feature>
<feature type="sequence conflict" description="In Ref. 8; BAD96829." evidence="29" ref="8">
    <original>D</original>
    <variation>G</variation>
    <location>
        <position position="419"/>
    </location>
</feature>
<feature type="sequence conflict" description="In Ref. 8; BAD96829." evidence="29" ref="8">
    <original>P</original>
    <variation>S</variation>
    <location>
        <position position="440"/>
    </location>
</feature>
<feature type="sequence conflict" description="In Ref. 2; AAK77492." evidence="29" ref="2">
    <original>S</original>
    <variation>R</variation>
    <location>
        <position position="473"/>
    </location>
</feature>
<feature type="sequence conflict" description="In Ref. 10; AAC41729." evidence="29" ref="10">
    <original>ARPPDPPASAPPD</original>
    <variation>KHPIICRLIHFSN</variation>
    <location>
        <begin position="487"/>
        <end position="499"/>
    </location>
</feature>
<feature type="sequence conflict" description="In Ref. 5; CAG38751." evidence="29" ref="5">
    <original>G</original>
    <variation>W</variation>
    <location>
        <position position="553"/>
    </location>
</feature>
<feature type="helix" evidence="36">
    <location>
        <begin position="10"/>
        <end position="53"/>
    </location>
</feature>
<feature type="helix" evidence="36">
    <location>
        <begin position="68"/>
        <end position="97"/>
    </location>
</feature>
<feature type="helix" evidence="36">
    <location>
        <begin position="99"/>
        <end position="160"/>
    </location>
</feature>
<feature type="helix" evidence="36">
    <location>
        <begin position="166"/>
        <end position="206"/>
    </location>
</feature>
<feature type="helix" evidence="36">
    <location>
        <begin position="208"/>
        <end position="258"/>
    </location>
</feature>
<feature type="helix" evidence="36">
    <location>
        <begin position="261"/>
        <end position="271"/>
    </location>
</feature>
<feature type="helix" evidence="36">
    <location>
        <begin position="273"/>
        <end position="275"/>
    </location>
</feature>
<feature type="strand" evidence="37">
    <location>
        <begin position="391"/>
        <end position="394"/>
    </location>
</feature>
<feature type="helix" evidence="37">
    <location>
        <begin position="396"/>
        <end position="421"/>
    </location>
</feature>
<feature type="helix" evidence="37">
    <location>
        <begin position="423"/>
        <end position="433"/>
    </location>
</feature>
<feature type="helix" evidence="37">
    <location>
        <begin position="435"/>
        <end position="437"/>
    </location>
</feature>
<feature type="helix" evidence="37">
    <location>
        <begin position="440"/>
        <end position="442"/>
    </location>
</feature>
<feature type="helix" evidence="37">
    <location>
        <begin position="444"/>
        <end position="477"/>
    </location>
</feature>
<feature type="strand" evidence="35">
    <location>
        <begin position="544"/>
        <end position="549"/>
    </location>
</feature>
<feature type="strand" evidence="35">
    <location>
        <begin position="566"/>
        <end position="571"/>
    </location>
</feature>
<feature type="strand" evidence="35">
    <location>
        <begin position="574"/>
        <end position="576"/>
    </location>
</feature>
<feature type="strand" evidence="35">
    <location>
        <begin position="578"/>
        <end position="582"/>
    </location>
</feature>
<feature type="strand" evidence="35">
    <location>
        <begin position="584"/>
        <end position="586"/>
    </location>
</feature>
<feature type="strand" evidence="35">
    <location>
        <begin position="588"/>
        <end position="592"/>
    </location>
</feature>
<feature type="helix" evidence="35">
    <location>
        <begin position="593"/>
        <end position="595"/>
    </location>
</feature>
<feature type="strand" evidence="35">
    <location>
        <begin position="596"/>
        <end position="598"/>
    </location>
</feature>
<accession>Q15642</accession>
<accession>B2R8A6</accession>
<accession>B7WP22</accession>
<accession>D6W645</accession>
<accession>O15184</accession>
<accession>Q53G22</accession>
<accession>Q5TZN1</accession>
<accession>Q6FI24</accession>
<accession>Q8NFL1</accession>
<accession>Q8TCY1</accession>
<accession>Q8TDX3</accession>
<accession>Q96RJ1</accession>
<protein>
    <recommendedName>
        <fullName>Cdc42-interacting protein 4</fullName>
    </recommendedName>
    <alternativeName>
        <fullName>Protein Felic</fullName>
    </alternativeName>
    <alternativeName>
        <fullName>Salt tolerant protein</fullName>
        <shortName>hSTP</shortName>
    </alternativeName>
    <alternativeName>
        <fullName>Thyroid receptor-interacting protein 10</fullName>
        <shortName>TR-interacting protein 10</shortName>
        <shortName>TRIP-10</shortName>
    </alternativeName>
</protein>
<name>CIP4_HUMAN</name>
<comment type="function">
    <text evidence="1 7 15 16">Required for translocation of GLUT4 to the plasma membrane in response to insulin signaling (By similarity). Required to coordinate membrane tubulation with reorganization of the actin cytoskeleton during endocytosis. Binds to lipids such as phosphatidylinositol 4,5-bisphosphate and phosphatidylserine and promotes membrane invagination and the formation of tubules. Also promotes CDC42-induced actin polymerization by recruiting WASL/N-WASP which in turn activates the Arp2/3 complex. Actin polymerization may promote the fission of membrane tubules to form endocytic vesicles. Required for the formation of podosomes, actin-rich adhesion structures specific to monocyte-derived cells. May be required for the lysosomal retention of FASLG/FASL.</text>
</comment>
<comment type="subunit">
    <text evidence="1 6 9 12 13 14 15 16 17 18 19 20">Interacts specifically with GTP-bound RHOQ. Interacts with DNM2 and PDE6G (By similarity). Homodimerizes, the dimers can polymerize end-to-end to form filamentous structures. Interacts specifically with GTP-bound CDC42. Interacts with AKAP9, ARHGAP17, DAAM1, DIAPH1, DIAPH2, DNM1, FASLG/FASL, GAPVD1, LYN, microtubules, SRC, WAS/WASP and WASL/N-WASP. Interacts with the ligand binding domain of the thyroid receptor (TR) in the presence of thyroid hormone. May interact with CTNNB1 and HD/HTT.</text>
</comment>
<comment type="interaction">
    <interactant intactId="EBI-739936">
        <id>Q15642</id>
    </interactant>
    <interactant intactId="EBI-2625954">
        <id>P78325</id>
        <label>ADAM8</label>
    </interactant>
    <organismsDiffer>false</organismsDiffer>
    <experiments>2</experiments>
</comment>
<comment type="interaction">
    <interactant intactId="EBI-739936">
        <id>Q15642</id>
    </interactant>
    <interactant intactId="EBI-3959665">
        <id>Q1RLN5</id>
        <label>ARHGAP12</label>
    </interactant>
    <organismsDiffer>false</organismsDiffer>
    <experiments>3</experiments>
</comment>
<comment type="interaction">
    <interactant intactId="EBI-739936">
        <id>Q15642</id>
    </interactant>
    <interactant intactId="EBI-1642807">
        <id>Q68EM7</id>
        <label>ARHGAP17</label>
    </interactant>
    <organismsDiffer>false</organismsDiffer>
    <experiments>3</experiments>
</comment>
<comment type="interaction">
    <interactant intactId="EBI-739936">
        <id>Q15642</id>
    </interactant>
    <interactant intactId="EBI-10238335">
        <id>Q17R89-2</id>
        <label>ARHGAP44</label>
    </interactant>
    <organismsDiffer>false</organismsDiffer>
    <experiments>3</experiments>
</comment>
<comment type="interaction">
    <interactant intactId="EBI-739936">
        <id>Q15642</id>
    </interactant>
    <interactant intactId="EBI-495538">
        <id>P48023</id>
        <label>FASLG</label>
    </interactant>
    <organismsDiffer>false</organismsDiffer>
    <experiments>4</experiments>
</comment>
<comment type="interaction">
    <interactant intactId="EBI-739936">
        <id>Q15642</id>
    </interactant>
    <interactant intactId="EBI-6285694">
        <id>Q9H4E5</id>
        <label>RHOJ</label>
    </interactant>
    <organismsDiffer>false</organismsDiffer>
    <experiments>3</experiments>
</comment>
<comment type="interaction">
    <interactant intactId="EBI-739936">
        <id>Q15642</id>
    </interactant>
    <interactant intactId="EBI-346869">
        <id>Q9Y3L3</id>
        <label>SH3BP1</label>
    </interactant>
    <organismsDiffer>false</organismsDiffer>
    <experiments>3</experiments>
</comment>
<comment type="interaction">
    <interactant intactId="EBI-739936">
        <id>Q15642</id>
    </interactant>
    <interactant intactId="EBI-455078">
        <id>Q969G3</id>
        <label>SMARCE1</label>
    </interactant>
    <organismsDiffer>false</organismsDiffer>
    <experiments>3</experiments>
</comment>
<comment type="interaction">
    <interactant intactId="EBI-739936">
        <id>Q15642</id>
    </interactant>
    <interactant intactId="EBI-717399">
        <id>Q9BSI4</id>
        <label>TINF2</label>
    </interactant>
    <organismsDiffer>false</organismsDiffer>
    <experiments>2</experiments>
</comment>
<comment type="interaction">
    <interactant intactId="EBI-739936">
        <id>Q15642</id>
    </interactant>
    <interactant intactId="EBI-739936">
        <id>Q15642</id>
        <label>TRIP10</label>
    </interactant>
    <organismsDiffer>false</organismsDiffer>
    <experiments>4</experiments>
</comment>
<comment type="interaction">
    <interactant intactId="EBI-739936">
        <id>Q15642</id>
    </interactant>
    <interactant intactId="EBI-1548747">
        <id>Q92558</id>
        <label>WASF1</label>
    </interactant>
    <organismsDiffer>false</organismsDiffer>
    <experiments>3</experiments>
</comment>
<comment type="interaction">
    <interactant intactId="EBI-16191375">
        <id>Q15642-1</id>
    </interactant>
    <interactant intactId="EBI-8008869">
        <id>P97573</id>
        <label>Inpp5d</label>
    </interactant>
    <organismsDiffer>true</organismsDiffer>
    <experiments>2</experiments>
</comment>
<comment type="interaction">
    <interactant intactId="EBI-6550597">
        <id>Q15642-2</id>
    </interactant>
    <interactant intactId="EBI-11743294">
        <id>Q8IZP0-5</id>
        <label>ABI1</label>
    </interactant>
    <organismsDiffer>false</organismsDiffer>
    <experiments>3</experiments>
</comment>
<comment type="interaction">
    <interactant intactId="EBI-6550597">
        <id>Q15642-2</id>
    </interactant>
    <interactant intactId="EBI-10693977">
        <id>P42684-3</id>
        <label>ABL2</label>
    </interactant>
    <organismsDiffer>false</organismsDiffer>
    <experiments>3</experiments>
</comment>
<comment type="interaction">
    <interactant intactId="EBI-6550597">
        <id>Q15642-2</id>
    </interactant>
    <interactant intactId="EBI-11959591">
        <id>Q8IWW6-4</id>
        <label>ARHGAP12</label>
    </interactant>
    <organismsDiffer>false</organismsDiffer>
    <experiments>3</experiments>
</comment>
<comment type="interaction">
    <interactant intactId="EBI-6550597">
        <id>Q15642-2</id>
    </interactant>
    <interactant intactId="EBI-1642807">
        <id>Q68EM7</id>
        <label>ARHGAP17</label>
    </interactant>
    <organismsDiffer>false</organismsDiffer>
    <experiments>3</experiments>
</comment>
<comment type="interaction">
    <interactant intactId="EBI-6550597">
        <id>Q15642-2</id>
    </interactant>
    <interactant intactId="EBI-2817289">
        <id>Q9Y4D1</id>
        <label>DAAM1</label>
    </interactant>
    <organismsDiffer>false</organismsDiffer>
    <experiments>2</experiments>
</comment>
<comment type="interaction">
    <interactant intactId="EBI-6550597">
        <id>Q15642-2</id>
    </interactant>
    <interactant intactId="EBI-2340258">
        <id>Q8N9I9</id>
        <label>DTX3</label>
    </interactant>
    <organismsDiffer>false</organismsDiffer>
    <experiments>3</experiments>
</comment>
<comment type="interaction">
    <interactant intactId="EBI-6550597">
        <id>Q15642-2</id>
    </interactant>
    <interactant intactId="EBI-2652631">
        <id>O43248</id>
        <label>HOXC11</label>
    </interactant>
    <organismsDiffer>false</organismsDiffer>
    <experiments>3</experiments>
</comment>
<comment type="interaction">
    <interactant intactId="EBI-6550597">
        <id>Q15642-2</id>
    </interactant>
    <interactant intactId="EBI-466029">
        <id>P42858</id>
        <label>HTT</label>
    </interactant>
    <organismsDiffer>false</organismsDiffer>
    <experiments>18</experiments>
</comment>
<comment type="interaction">
    <interactant intactId="EBI-6550597">
        <id>Q15642-2</id>
    </interactant>
    <interactant intactId="EBI-17181882">
        <id>O75564-2</id>
        <label>JRK</label>
    </interactant>
    <organismsDiffer>false</organismsDiffer>
    <experiments>3</experiments>
</comment>
<comment type="interaction">
    <interactant intactId="EBI-6550597">
        <id>Q15642-2</id>
    </interactant>
    <interactant intactId="EBI-2864512">
        <id>P50221</id>
        <label>MEOX1</label>
    </interactant>
    <organismsDiffer>false</organismsDiffer>
    <experiments>3</experiments>
</comment>
<comment type="interaction">
    <interactant intactId="EBI-6550597">
        <id>Q15642-2</id>
    </interactant>
    <interactant intactId="EBI-16439278">
        <id>Q6FHY5</id>
        <label>MEOX2</label>
    </interactant>
    <organismsDiffer>false</organismsDiffer>
    <experiments>3</experiments>
</comment>
<comment type="interaction">
    <interactant intactId="EBI-6550597">
        <id>Q15642-2</id>
    </interactant>
    <interactant intactId="EBI-936601">
        <id>P52952</id>
        <label>NKX2-5</label>
    </interactant>
    <organismsDiffer>false</organismsDiffer>
    <experiments>3</experiments>
</comment>
<comment type="interaction">
    <interactant intactId="EBI-6550597">
        <id>Q15642-2</id>
    </interactant>
    <interactant intactId="EBI-747278">
        <id>P26367</id>
        <label>PAX6</label>
    </interactant>
    <organismsDiffer>false</organismsDiffer>
    <experiments>3</experiments>
</comment>
<comment type="interaction">
    <interactant intactId="EBI-6550597">
        <id>Q15642-2</id>
    </interactant>
    <interactant intactId="EBI-366017">
        <id>Q13671</id>
        <label>RIN1</label>
    </interactant>
    <organismsDiffer>false</organismsDiffer>
    <experiments>3</experiments>
</comment>
<comment type="interaction">
    <interactant intactId="EBI-6550597">
        <id>Q15642-2</id>
    </interactant>
    <interactant intactId="EBI-2462271">
        <id>Q15428</id>
        <label>SF3A2</label>
    </interactant>
    <organismsDiffer>false</organismsDiffer>
    <experiments>3</experiments>
</comment>
<comment type="interaction">
    <interactant intactId="EBI-6550597">
        <id>Q15642-2</id>
    </interactant>
    <interactant intactId="EBI-346869">
        <id>Q9Y3L3</id>
        <label>SH3BP1</label>
    </interactant>
    <organismsDiffer>false</organismsDiffer>
    <experiments>3</experiments>
</comment>
<comment type="interaction">
    <interactant intactId="EBI-6550597">
        <id>Q15642-2</id>
    </interactant>
    <interactant intactId="EBI-455078">
        <id>Q969G3</id>
        <label>SMARCE1</label>
    </interactant>
    <organismsDiffer>false</organismsDiffer>
    <experiments>6</experiments>
</comment>
<comment type="interaction">
    <interactant intactId="EBI-6550597">
        <id>Q15642-2</id>
    </interactant>
    <interactant intactId="EBI-741515">
        <id>Q9NVV9</id>
        <label>THAP1</label>
    </interactant>
    <organismsDiffer>false</organismsDiffer>
    <experiments>3</experiments>
</comment>
<comment type="interaction">
    <interactant intactId="EBI-6550597">
        <id>Q15642-2</id>
    </interactant>
    <interactant intactId="EBI-6550597">
        <id>Q15642-2</id>
        <label>TRIP10</label>
    </interactant>
    <organismsDiffer>false</organismsDiffer>
    <experiments>3</experiments>
</comment>
<comment type="interaction">
    <interactant intactId="EBI-6550597">
        <id>Q15642-2</id>
    </interactant>
    <interactant intactId="EBI-12927594">
        <id>Q5T230</id>
        <label>UTF1</label>
    </interactant>
    <organismsDiffer>false</organismsDiffer>
    <experiments>3</experiments>
</comment>
<comment type="interaction">
    <interactant intactId="EBI-6550597">
        <id>Q15642-2</id>
    </interactant>
    <interactant intactId="EBI-1548747">
        <id>Q92558</id>
        <label>WASF1</label>
    </interactant>
    <organismsDiffer>false</organismsDiffer>
    <experiments>3</experiments>
</comment>
<comment type="interaction">
    <interactant intactId="EBI-6550597">
        <id>Q15642-2</id>
    </interactant>
    <interactant intactId="EBI-957615">
        <id>O00401</id>
        <label>WASL</label>
    </interactant>
    <organismsDiffer>false</organismsDiffer>
    <experiments>5</experiments>
</comment>
<comment type="interaction">
    <interactant intactId="EBI-6550597">
        <id>Q15642-2</id>
    </interactant>
    <interactant intactId="EBI-11522250">
        <id>O15156-2</id>
        <label>ZBTB7B</label>
    </interactant>
    <organismsDiffer>false</organismsDiffer>
    <experiments>3</experiments>
</comment>
<comment type="subcellular location">
    <subcellularLocation>
        <location>Cytoplasm</location>
        <location>Cytoskeleton</location>
    </subcellularLocation>
    <subcellularLocation>
        <location>Cytoplasm</location>
        <location>Cell cortex</location>
    </subcellularLocation>
    <subcellularLocation>
        <location>Lysosome</location>
    </subcellularLocation>
    <subcellularLocation>
        <location>Golgi apparatus</location>
    </subcellularLocation>
    <subcellularLocation>
        <location>Cell membrane</location>
    </subcellularLocation>
    <subcellularLocation>
        <location>Cell projection</location>
        <location>Phagocytic cup</location>
    </subcellularLocation>
    <text evidence="1">Translocates to the plasma membrane in response to insulin stimulation, and this may require active RHOQ (By similarity). Localizes to cortical regions coincident with F-actin, to lysosomes and to sites of phagocytosis in macrophages. Also localizes to the Golgi, and this requires AKAP9.</text>
</comment>
<comment type="subcellular location">
    <molecule>Isoform 5</molecule>
    <subcellularLocation>
        <location>Cytoplasm</location>
        <location>Perinuclear region</location>
    </subcellularLocation>
</comment>
<comment type="alternative products">
    <event type="alternative splicing"/>
    <isoform>
        <id>Q15642-1</id>
        <name>1</name>
        <name>L</name>
        <sequence type="displayed"/>
    </isoform>
    <isoform>
        <id>Q15642-2</id>
        <name>2</name>
        <name>A</name>
        <name>W</name>
        <sequence type="described" ref="VSP_021716"/>
    </isoform>
    <isoform>
        <id>Q15642-3</id>
        <name>3</name>
        <name>B</name>
        <sequence type="described" ref="VSP_021716 VSP_021721"/>
    </isoform>
    <isoform>
        <id>Q15642-4</id>
        <name>4</name>
        <name>C</name>
        <sequence type="described" ref="VSP_021716 VSP_021719 VSP_021720"/>
    </isoform>
    <isoform>
        <id>Q15642-5</id>
        <name>5</name>
        <name>V</name>
        <sequence type="described" ref="VSP_021717 VSP_021718"/>
    </isoform>
</comment>
<comment type="tissue specificity">
    <text evidence="8 11 12 13 20">Expressed in brain, colon, heart, kidney, liver, lung, megakaryocyte, ovary, pancreas, peripheral blood lymphocytes, placenta, prostate, skeletal muscle, small intestine, spleen, testis, thymus and trachea.</text>
</comment>
<comment type="induction">
    <text evidence="10 11">Induced by adriamycin treatment and this effect is counteracted by HGF/SF. Expression is reduced during differentiation.</text>
</comment>
<comment type="domain">
    <text evidence="19">The F-BAR domain binds the phospholipid membrane with its concave surface. The end-to-end polymerization of dimers of these domains provides a curved surface that fits best membranes with around 600 A diameter, and may drive tubulation.</text>
</comment>
<comment type="PTM">
    <text evidence="12 14 17">Tyrosine phosphorylated. Also phosphorylated by PKA.</text>
</comment>
<comment type="similarity">
    <text evidence="29">Belongs to the FNBP1 family.</text>
</comment>
<sequence>MDWGTELWDQFEVLERHTQWGLDLLDRYVKFVKERTEVEQAYAKQLRSLVKKYLPKRPAKDDPESKFSQQQSFVQILQEVNDFAGQRELVAENLSVRVCLELTKYSQEMKQERKMHFQEGRRAQQQLENGFKQLENSKRKFERDCREAEKAAQTAERLDQDINATKADVEKAKQQAHLRSHMAEESKNEYAAQLQRFNRDQAHFYFSQMPQIFDKLQDMDERRATRLGAGYGLLSEAELEVVPIIAKCLEGMKVAANAVDPKNDSHVLIELHKSGFARPGDVEFEDFSQPMNRAPSDSSLGTPSDGRPELRGPGRSRTKRWPFGKKNKPRPPPLSPLGGPVPSALPNGPPSPRSGRDPLAILSEISKSVKPRLASFRSLRGSRGTVVTEDFSHLPPEQQRKRLQQQLEERSRELQKEVDQREALKKMKDVYEKTPQMGDPASLEPQIAETLSNIERLKLEVQKYEAWLAEAESRVLSNRGDSLSRHARPPDPPASAPPDSSSNSASQDTKESSEEPPSEESQDTPIYTEFDEDFEEEPTSPIGHCVAIYHFEGSSEGTISMAEGEDLSLMEEDKGDGWTRVRRKEGGEGYVPTSYLRVTLN</sequence>
<reference key="1">
    <citation type="journal article" date="1997" name="Curr. Biol.">
        <title>A Cdc42 target protein with homology to the non-kinase domain of FER has a potential role in regulating the actin cytoskeleton.</title>
        <authorList>
            <person name="Aspenstroem P."/>
        </authorList>
    </citation>
    <scope>NUCLEOTIDE SEQUENCE [MRNA] (ISOFORM 2)</scope>
    <scope>INTERACTION WITH CDC42</scope>
    <scope>SUBCELLULAR LOCATION</scope>
    <scope>TISSUE SPECIFICITY</scope>
</reference>
<reference key="2">
    <citation type="journal article" date="2002" name="Biochem. Biophys. Res. Commun.">
        <title>Identification and genetic analysis of human and mouse activated Cdc42 interacting protein-4 isoforms.</title>
        <authorList>
            <person name="Wang L."/>
            <person name="Rudert W.A."/>
            <person name="Grishin A."/>
            <person name="Dombrosky-Ferlan P."/>
            <person name="Sullivan K."/>
            <person name="Deng X."/>
            <person name="Whitcomb D."/>
            <person name="Corey S.J."/>
        </authorList>
    </citation>
    <scope>NUCLEOTIDE SEQUENCE [MRNA] (ISOFORMS 3 AND 4)</scope>
    <scope>TISSUE SPECIFICITY</scope>
    <scope>INDUCTION</scope>
</reference>
<reference key="3">
    <citation type="journal article" date="2006" name="Biochem. Biophys. Res. Commun.">
        <title>Splicing variant of Cdc42 interacting protein-4 disrupts beta-catenin-mediated cell-cell adhesion: expression and function in renal cell carcinoma.</title>
        <authorList>
            <person name="Tsuji E."/>
            <person name="Tsuji Y."/>
            <person name="Fujiwara T."/>
            <person name="Ogata S."/>
            <person name="Tsukamoto K."/>
            <person name="Saku K."/>
        </authorList>
    </citation>
    <scope>NUCLEOTIDE SEQUENCE [MRNA] (ISOFORM 5)</scope>
    <scope>INTERACTION WITH CTNNB1</scope>
    <scope>SUBCELLULAR LOCATION</scope>
    <scope>PHOSPHORYLATION AT TYROSINE RESIDUES</scope>
    <source>
        <tissue>Renal cell carcinoma</tissue>
    </source>
</reference>
<reference key="4">
    <citation type="submission" date="2002-04" db="EMBL/GenBank/DDBJ databases">
        <title>Identification of a Cdc42-interacting protein 4 longer variant (Cip4L) which is differentially expressed in human tissues.</title>
        <authorList>
            <person name="Wang L."/>
            <person name="Rudert W.A."/>
            <person name="Sullivan K."/>
            <person name="Deng X."/>
            <person name="Corey S.J."/>
        </authorList>
    </citation>
    <scope>NUCLEOTIDE SEQUENCE [MRNA] (ISOFORM 1)</scope>
    <source>
        <tissue>Lung</tissue>
    </source>
</reference>
<reference key="5">
    <citation type="submission" date="2004-06" db="EMBL/GenBank/DDBJ databases">
        <title>Cloning of human full open reading frames in Gateway(TM) system entry vector (pDONR201).</title>
        <authorList>
            <person name="Halleck A."/>
            <person name="Ebert L."/>
            <person name="Mkoundinya M."/>
            <person name="Schick M."/>
            <person name="Eisenstein S."/>
            <person name="Neubert P."/>
            <person name="Kstrang K."/>
            <person name="Schatten R."/>
            <person name="Shen B."/>
            <person name="Henze S."/>
            <person name="Mar W."/>
            <person name="Korn B."/>
            <person name="Zuo D."/>
            <person name="Hu Y."/>
            <person name="LaBaer J."/>
        </authorList>
    </citation>
    <scope>NUCLEOTIDE SEQUENCE [LARGE SCALE MRNA] (ISOFORM 2)</scope>
</reference>
<reference key="6">
    <citation type="submission" date="2004-11" db="EMBL/GenBank/DDBJ databases">
        <title>Cloning of human full-length CDSs in BD Creator(TM) system donor vector.</title>
        <authorList>
            <person name="Kalnine N."/>
            <person name="Chen X."/>
            <person name="Rolfs A."/>
            <person name="Halleck A."/>
            <person name="Hines L."/>
            <person name="Eisenstein S."/>
            <person name="Koundinya M."/>
            <person name="Raphael J."/>
            <person name="Moreira D."/>
            <person name="Kelley T."/>
            <person name="LaBaer J."/>
            <person name="Lin Y."/>
            <person name="Phelan M."/>
            <person name="Farmer A."/>
        </authorList>
    </citation>
    <scope>NUCLEOTIDE SEQUENCE [LARGE SCALE MRNA] (ISOFORM 2)</scope>
</reference>
<reference key="7">
    <citation type="journal article" date="2004" name="Nat. Genet.">
        <title>Complete sequencing and characterization of 21,243 full-length human cDNAs.</title>
        <authorList>
            <person name="Ota T."/>
            <person name="Suzuki Y."/>
            <person name="Nishikawa T."/>
            <person name="Otsuki T."/>
            <person name="Sugiyama T."/>
            <person name="Irie R."/>
            <person name="Wakamatsu A."/>
            <person name="Hayashi K."/>
            <person name="Sato H."/>
            <person name="Nagai K."/>
            <person name="Kimura K."/>
            <person name="Makita H."/>
            <person name="Sekine M."/>
            <person name="Obayashi M."/>
            <person name="Nishi T."/>
            <person name="Shibahara T."/>
            <person name="Tanaka T."/>
            <person name="Ishii S."/>
            <person name="Yamamoto J."/>
            <person name="Saito K."/>
            <person name="Kawai Y."/>
            <person name="Isono Y."/>
            <person name="Nakamura Y."/>
            <person name="Nagahari K."/>
            <person name="Murakami K."/>
            <person name="Yasuda T."/>
            <person name="Iwayanagi T."/>
            <person name="Wagatsuma M."/>
            <person name="Shiratori A."/>
            <person name="Sudo H."/>
            <person name="Hosoiri T."/>
            <person name="Kaku Y."/>
            <person name="Kodaira H."/>
            <person name="Kondo H."/>
            <person name="Sugawara M."/>
            <person name="Takahashi M."/>
            <person name="Kanda K."/>
            <person name="Yokoi T."/>
            <person name="Furuya T."/>
            <person name="Kikkawa E."/>
            <person name="Omura Y."/>
            <person name="Abe K."/>
            <person name="Kamihara K."/>
            <person name="Katsuta N."/>
            <person name="Sato K."/>
            <person name="Tanikawa M."/>
            <person name="Yamazaki M."/>
            <person name="Ninomiya K."/>
            <person name="Ishibashi T."/>
            <person name="Yamashita H."/>
            <person name="Murakawa K."/>
            <person name="Fujimori K."/>
            <person name="Tanai H."/>
            <person name="Kimata M."/>
            <person name="Watanabe M."/>
            <person name="Hiraoka S."/>
            <person name="Chiba Y."/>
            <person name="Ishida S."/>
            <person name="Ono Y."/>
            <person name="Takiguchi S."/>
            <person name="Watanabe S."/>
            <person name="Yosida M."/>
            <person name="Hotuta T."/>
            <person name="Kusano J."/>
            <person name="Kanehori K."/>
            <person name="Takahashi-Fujii A."/>
            <person name="Hara H."/>
            <person name="Tanase T.-O."/>
            <person name="Nomura Y."/>
            <person name="Togiya S."/>
            <person name="Komai F."/>
            <person name="Hara R."/>
            <person name="Takeuchi K."/>
            <person name="Arita M."/>
            <person name="Imose N."/>
            <person name="Musashino K."/>
            <person name="Yuuki H."/>
            <person name="Oshima A."/>
            <person name="Sasaki N."/>
            <person name="Aotsuka S."/>
            <person name="Yoshikawa Y."/>
            <person name="Matsunawa H."/>
            <person name="Ichihara T."/>
            <person name="Shiohata N."/>
            <person name="Sano S."/>
            <person name="Moriya S."/>
            <person name="Momiyama H."/>
            <person name="Satoh N."/>
            <person name="Takami S."/>
            <person name="Terashima Y."/>
            <person name="Suzuki O."/>
            <person name="Nakagawa S."/>
            <person name="Senoh A."/>
            <person name="Mizoguchi H."/>
            <person name="Goto Y."/>
            <person name="Shimizu F."/>
            <person name="Wakebe H."/>
            <person name="Hishigaki H."/>
            <person name="Watanabe T."/>
            <person name="Sugiyama A."/>
            <person name="Takemoto M."/>
            <person name="Kawakami B."/>
            <person name="Yamazaki M."/>
            <person name="Watanabe K."/>
            <person name="Kumagai A."/>
            <person name="Itakura S."/>
            <person name="Fukuzumi Y."/>
            <person name="Fujimori Y."/>
            <person name="Komiyama M."/>
            <person name="Tashiro H."/>
            <person name="Tanigami A."/>
            <person name="Fujiwara T."/>
            <person name="Ono T."/>
            <person name="Yamada K."/>
            <person name="Fujii Y."/>
            <person name="Ozaki K."/>
            <person name="Hirao M."/>
            <person name="Ohmori Y."/>
            <person name="Kawabata A."/>
            <person name="Hikiji T."/>
            <person name="Kobatake N."/>
            <person name="Inagaki H."/>
            <person name="Ikema Y."/>
            <person name="Okamoto S."/>
            <person name="Okitani R."/>
            <person name="Kawakami T."/>
            <person name="Noguchi S."/>
            <person name="Itoh T."/>
            <person name="Shigeta K."/>
            <person name="Senba T."/>
            <person name="Matsumura K."/>
            <person name="Nakajima Y."/>
            <person name="Mizuno T."/>
            <person name="Morinaga M."/>
            <person name="Sasaki M."/>
            <person name="Togashi T."/>
            <person name="Oyama M."/>
            <person name="Hata H."/>
            <person name="Watanabe M."/>
            <person name="Komatsu T."/>
            <person name="Mizushima-Sugano J."/>
            <person name="Satoh T."/>
            <person name="Shirai Y."/>
            <person name="Takahashi Y."/>
            <person name="Nakagawa K."/>
            <person name="Okumura K."/>
            <person name="Nagase T."/>
            <person name="Nomura N."/>
            <person name="Kikuchi H."/>
            <person name="Masuho Y."/>
            <person name="Yamashita R."/>
            <person name="Nakai K."/>
            <person name="Yada T."/>
            <person name="Nakamura Y."/>
            <person name="Ohara O."/>
            <person name="Isogai T."/>
            <person name="Sugano S."/>
        </authorList>
    </citation>
    <scope>NUCLEOTIDE SEQUENCE [LARGE SCALE MRNA] (ISOFORM 2)</scope>
    <source>
        <tissue>Small intestine</tissue>
    </source>
</reference>
<reference key="8">
    <citation type="submission" date="2005-04" db="EMBL/GenBank/DDBJ databases">
        <authorList>
            <person name="Suzuki Y."/>
            <person name="Sugano S."/>
            <person name="Totoki Y."/>
            <person name="Toyoda A."/>
            <person name="Takeda T."/>
            <person name="Sakaki Y."/>
            <person name="Tanaka A."/>
            <person name="Yokoyama S."/>
        </authorList>
    </citation>
    <scope>NUCLEOTIDE SEQUENCE [LARGE SCALE MRNA] (ISOFORM 2)</scope>
</reference>
<reference key="9">
    <citation type="journal article" date="2004" name="Nature">
        <title>The DNA sequence and biology of human chromosome 19.</title>
        <authorList>
            <person name="Grimwood J."/>
            <person name="Gordon L.A."/>
            <person name="Olsen A.S."/>
            <person name="Terry A."/>
            <person name="Schmutz J."/>
            <person name="Lamerdin J.E."/>
            <person name="Hellsten U."/>
            <person name="Goodstein D."/>
            <person name="Couronne O."/>
            <person name="Tran-Gyamfi M."/>
            <person name="Aerts A."/>
            <person name="Altherr M."/>
            <person name="Ashworth L."/>
            <person name="Bajorek E."/>
            <person name="Black S."/>
            <person name="Branscomb E."/>
            <person name="Caenepeel S."/>
            <person name="Carrano A.V."/>
            <person name="Caoile C."/>
            <person name="Chan Y.M."/>
            <person name="Christensen M."/>
            <person name="Cleland C.A."/>
            <person name="Copeland A."/>
            <person name="Dalin E."/>
            <person name="Dehal P."/>
            <person name="Denys M."/>
            <person name="Detter J.C."/>
            <person name="Escobar J."/>
            <person name="Flowers D."/>
            <person name="Fotopulos D."/>
            <person name="Garcia C."/>
            <person name="Georgescu A.M."/>
            <person name="Glavina T."/>
            <person name="Gomez M."/>
            <person name="Gonzales E."/>
            <person name="Groza M."/>
            <person name="Hammon N."/>
            <person name="Hawkins T."/>
            <person name="Haydu L."/>
            <person name="Ho I."/>
            <person name="Huang W."/>
            <person name="Israni S."/>
            <person name="Jett J."/>
            <person name="Kadner K."/>
            <person name="Kimball H."/>
            <person name="Kobayashi A."/>
            <person name="Larionov V."/>
            <person name="Leem S.-H."/>
            <person name="Lopez F."/>
            <person name="Lou Y."/>
            <person name="Lowry S."/>
            <person name="Malfatti S."/>
            <person name="Martinez D."/>
            <person name="McCready P.M."/>
            <person name="Medina C."/>
            <person name="Morgan J."/>
            <person name="Nelson K."/>
            <person name="Nolan M."/>
            <person name="Ovcharenko I."/>
            <person name="Pitluck S."/>
            <person name="Pollard M."/>
            <person name="Popkie A.P."/>
            <person name="Predki P."/>
            <person name="Quan G."/>
            <person name="Ramirez L."/>
            <person name="Rash S."/>
            <person name="Retterer J."/>
            <person name="Rodriguez A."/>
            <person name="Rogers S."/>
            <person name="Salamov A."/>
            <person name="Salazar A."/>
            <person name="She X."/>
            <person name="Smith D."/>
            <person name="Slezak T."/>
            <person name="Solovyev V."/>
            <person name="Thayer N."/>
            <person name="Tice H."/>
            <person name="Tsai M."/>
            <person name="Ustaszewska A."/>
            <person name="Vo N."/>
            <person name="Wagner M."/>
            <person name="Wheeler J."/>
            <person name="Wu K."/>
            <person name="Xie G."/>
            <person name="Yang J."/>
            <person name="Dubchak I."/>
            <person name="Furey T.S."/>
            <person name="DeJong P."/>
            <person name="Dickson M."/>
            <person name="Gordon D."/>
            <person name="Eichler E.E."/>
            <person name="Pennacchio L.A."/>
            <person name="Richardson P."/>
            <person name="Stubbs L."/>
            <person name="Rokhsar D.S."/>
            <person name="Myers R.M."/>
            <person name="Rubin E.M."/>
            <person name="Lucas S.M."/>
        </authorList>
    </citation>
    <scope>NUCLEOTIDE SEQUENCE [LARGE SCALE GENOMIC DNA]</scope>
</reference>
<reference key="10">
    <citation type="submission" date="2005-09" db="EMBL/GenBank/DDBJ databases">
        <authorList>
            <person name="Mural R.J."/>
            <person name="Istrail S."/>
            <person name="Sutton G.G."/>
            <person name="Florea L."/>
            <person name="Halpern A.L."/>
            <person name="Mobarry C.M."/>
            <person name="Lippert R."/>
            <person name="Walenz B."/>
            <person name="Shatkay H."/>
            <person name="Dew I."/>
            <person name="Miller J.R."/>
            <person name="Flanigan M.J."/>
            <person name="Edwards N.J."/>
            <person name="Bolanos R."/>
            <person name="Fasulo D."/>
            <person name="Halldorsson B.V."/>
            <person name="Hannenhalli S."/>
            <person name="Turner R."/>
            <person name="Yooseph S."/>
            <person name="Lu F."/>
            <person name="Nusskern D.R."/>
            <person name="Shue B.C."/>
            <person name="Zheng X.H."/>
            <person name="Zhong F."/>
            <person name="Delcher A.L."/>
            <person name="Huson D.H."/>
            <person name="Kravitz S.A."/>
            <person name="Mouchard L."/>
            <person name="Reinert K."/>
            <person name="Remington K.A."/>
            <person name="Clark A.G."/>
            <person name="Waterman M.S."/>
            <person name="Eichler E.E."/>
            <person name="Adams M.D."/>
            <person name="Hunkapiller M.W."/>
            <person name="Myers E.W."/>
            <person name="Venter J.C."/>
        </authorList>
    </citation>
    <scope>NUCLEOTIDE SEQUENCE [LARGE SCALE GENOMIC DNA]</scope>
</reference>
<reference key="11">
    <citation type="journal article" date="2004" name="Genome Res.">
        <title>The status, quality, and expansion of the NIH full-length cDNA project: the Mammalian Gene Collection (MGC).</title>
        <authorList>
            <consortium name="The MGC Project Team"/>
        </authorList>
    </citation>
    <scope>NUCLEOTIDE SEQUENCE [LARGE SCALE MRNA] (ISOFORM 2)</scope>
    <source>
        <tissue>Muscle</tissue>
    </source>
</reference>
<reference key="12">
    <citation type="journal article" date="1995" name="Mol. Endocrinol.">
        <title>Two classes of proteins dependent on either the presence or absence of thyroid hormone for interaction with the thyroid hormone receptor.</title>
        <authorList>
            <person name="Lee J.W."/>
            <person name="Choi H.-S."/>
            <person name="Gyuris J."/>
            <person name="Brent R."/>
            <person name="Moore D.D."/>
        </authorList>
    </citation>
    <scope>NUCLEOTIDE SEQUENCE [MRNA] OF 487-601 (ISOFORMS 1/2)</scope>
</reference>
<reference key="13">
    <citation type="journal article" date="2000" name="Genetica">
        <title>Molecular cloning and chromosomal localization of human salt-tolerant protein.</title>
        <authorList>
            <person name="Tsuji E."/>
            <person name="Tsuji Y."/>
        </authorList>
    </citation>
    <scope>TISSUE SPECIFICITY</scope>
</reference>
<reference key="14">
    <citation type="journal article" date="2000" name="J. Biol. Chem.">
        <title>Cdc42-interacting protein 4 mediates binding of the Wiskott-Aldrich syndrome protein to microtubules.</title>
        <authorList>
            <person name="Tian L."/>
            <person name="Nelson D.L."/>
            <person name="Stewart D.M."/>
        </authorList>
    </citation>
    <scope>INTERACTION WITH CDC42; MICROTUBULES AND WAS</scope>
    <scope>SUBCELLULAR LOCATION</scope>
    <scope>MUTAGENESIS OF ILE-454 AND LEU-468</scope>
</reference>
<reference key="15">
    <citation type="journal article" date="2000" name="J. Cell Sci.">
        <title>Microtubule-dependent formation of podosomal adhesion structures in primary human macrophages.</title>
        <authorList>
            <person name="Linder S."/>
            <person name="Huefner K."/>
            <person name="Wintergerst U."/>
            <person name="Aepfelbacher M."/>
        </authorList>
    </citation>
    <scope>FUNCTION</scope>
</reference>
<reference key="16">
    <citation type="journal article" date="2001" name="Cancer Res.">
        <title>Altered gene expression pattern in cultured human breast cancer cells treated with hepatocyte growth factor/scatter factor in the setting of DNA damage.</title>
        <authorList>
            <person name="Yuan R.-Q."/>
            <person name="Fan S."/>
            <person name="Achary M."/>
            <person name="Stewart D.M."/>
            <person name="Goldberg I.D."/>
            <person name="Rosen E.M."/>
        </authorList>
    </citation>
    <scope>INDUCTION</scope>
</reference>
<reference key="17">
    <citation type="journal article" date="2001" name="J. Biol. Chem.">
        <title>Rich, a rho GTPase-activating protein domain-containing protein involved in signaling by Cdc42 and Rac1.</title>
        <authorList>
            <person name="Richnau N."/>
            <person name="Aspenstroem P."/>
        </authorList>
    </citation>
    <scope>INTERACTION WITH ARHGAP17</scope>
    <scope>SUBCELLULAR LOCATION</scope>
</reference>
<reference key="18">
    <citation type="journal article" date="2003" name="Blood">
        <title>Felic (CIP4b), a novel binding partner with the Src kinase Lyn and Cdc42, localizes to the phagocytic cup.</title>
        <authorList>
            <person name="Dombrosky-Ferlan P."/>
            <person name="Grishin A."/>
            <person name="Botelho R.J."/>
            <person name="Sampson M."/>
            <person name="Wang L."/>
            <person name="Rudert W.A."/>
            <person name="Grinstein S."/>
            <person name="Corey S.J."/>
        </authorList>
    </citation>
    <scope>INTERACTION WITH CDC42; LYN AND SRC</scope>
    <scope>SUBCELLULAR LOCATION</scope>
    <scope>TISSUE SPECIFICITY</scope>
    <scope>PHOSPHORYLATION AT TYROSINE RESIDUES</scope>
</reference>
<reference key="19">
    <citation type="journal article" date="2003" name="Proc. Natl. Acad. Sci. U.S.A.">
        <title>Cdc42-interacting protein 4 binds to huntingtin: neuropathologic and biological evidence for a role in Huntington's disease.</title>
        <authorList>
            <person name="Holbert S."/>
            <person name="Dedeoglu A."/>
            <person name="Humbert S."/>
            <person name="Saudou F."/>
            <person name="Ferrante R.J."/>
            <person name="Neri C."/>
        </authorList>
    </citation>
    <scope>INTERACTION WITH HD</scope>
    <scope>SUBCELLULAR LOCATION</scope>
    <scope>TISSUE SPECIFICITY</scope>
</reference>
<reference key="20">
    <citation type="journal article" date="2004" name="Mol. Biol. Cell">
        <title>AKAP350 interaction with cdc42 interacting protein 4 at the Golgi apparatus.</title>
        <authorList>
            <person name="Larocca M.C."/>
            <person name="Shanks R.A."/>
            <person name="Tian L."/>
            <person name="Nelson D.L."/>
            <person name="Stewart D.M."/>
            <person name="Goldenring J.R."/>
        </authorList>
    </citation>
    <scope>INTERACTION WITH AKAP9</scope>
    <scope>SUBCELLULAR LOCATION</scope>
    <scope>PHOSPHORYLATION</scope>
</reference>
<reference key="21">
    <citation type="journal article" date="2005" name="Dev. Cell">
        <title>Dynamin and the actin cytoskeleton cooperatively regulate plasma membrane invagination by BAR and F-BAR proteins.</title>
        <authorList>
            <person name="Itoh T."/>
            <person name="Erdmann K.S."/>
            <person name="Roux A."/>
            <person name="Habermann B."/>
            <person name="Werner H."/>
            <person name="De Camilli P."/>
        </authorList>
    </citation>
    <scope>FUNCTION</scope>
    <scope>INTERACTION WITH DNM1 AND WASL</scope>
    <scope>SUBCELLULAR LOCATION</scope>
</reference>
<reference key="22">
    <citation type="journal article" date="2006" name="Cell">
        <title>Global, in vivo, and site-specific phosphorylation dynamics in signaling networks.</title>
        <authorList>
            <person name="Olsen J.V."/>
            <person name="Blagoev B."/>
            <person name="Gnad F."/>
            <person name="Macek B."/>
            <person name="Kumar C."/>
            <person name="Mortensen P."/>
            <person name="Mann M."/>
        </authorList>
    </citation>
    <scope>IDENTIFICATION BY MASS SPECTROMETRY [LARGE SCALE ANALYSIS]</scope>
    <source>
        <tissue>Cervix carcinoma</tissue>
    </source>
</reference>
<reference key="23">
    <citation type="journal article" date="2006" name="Cell. Signal.">
        <title>Regulation of FasL expression: a SH3 domain containing protein family involved in the lysosomal association of FasL.</title>
        <authorList>
            <person name="Qian J."/>
            <person name="Chen W."/>
            <person name="Lettau M."/>
            <person name="Podda G."/>
            <person name="Zoernig M."/>
            <person name="Kabelitz D."/>
            <person name="Janssen O."/>
        </authorList>
    </citation>
    <scope>FUNCTION</scope>
    <scope>INTERACTION WITH FASLG</scope>
    <scope>SUBCELLULAR LOCATION</scope>
</reference>
<reference key="24">
    <citation type="journal article" date="2006" name="Exp. Cell Res.">
        <title>The diaphanous-related formin DAAM1 collaborates with the Rho GTPases RhoA and Cdc42, CIP4 and Src in regulating cell morphogenesis and actin dynamics.</title>
        <authorList>
            <person name="Aspenstroem P."/>
            <person name="Richnau N."/>
            <person name="Johansson A.-S."/>
        </authorList>
    </citation>
    <scope>INTERACTION WITH DAAM1; DIAPH1 AND DIAPH2</scope>
    <scope>SUBCELLULAR LOCATION</scope>
</reference>
<reference key="25">
    <citation type="journal article" date="2008" name="J. Proteome Res.">
        <title>Phosphoproteome of resting human platelets.</title>
        <authorList>
            <person name="Zahedi R.P."/>
            <person name="Lewandrowski U."/>
            <person name="Wiesner J."/>
            <person name="Wortelkamp S."/>
            <person name="Moebius J."/>
            <person name="Schuetz C."/>
            <person name="Walter U."/>
            <person name="Gambaryan S."/>
            <person name="Sickmann A."/>
        </authorList>
    </citation>
    <scope>IDENTIFICATION BY MASS SPECTROMETRY [LARGE SCALE ANALYSIS]</scope>
    <source>
        <tissue>Platelet</tissue>
    </source>
</reference>
<reference key="26">
    <citation type="journal article" date="2008" name="Proc. Natl. Acad. Sci. U.S.A.">
        <title>A quantitative atlas of mitotic phosphorylation.</title>
        <authorList>
            <person name="Dephoure N."/>
            <person name="Zhou C."/>
            <person name="Villen J."/>
            <person name="Beausoleil S.A."/>
            <person name="Bakalarski C.E."/>
            <person name="Elledge S.J."/>
            <person name="Gygi S.P."/>
        </authorList>
    </citation>
    <scope>PHOSPHORYLATION [LARGE SCALE ANALYSIS] AT SER-296; SER-299; SER-335 AND SER-351</scope>
    <scope>IDENTIFICATION BY MASS SPECTROMETRY [LARGE SCALE ANALYSIS]</scope>
    <source>
        <tissue>Cervix carcinoma</tissue>
    </source>
</reference>
<reference key="27">
    <citation type="journal article" date="2010" name="Sci. Signal.">
        <title>Quantitative phosphoproteomics reveals widespread full phosphorylation site occupancy during mitosis.</title>
        <authorList>
            <person name="Olsen J.V."/>
            <person name="Vermeulen M."/>
            <person name="Santamaria A."/>
            <person name="Kumar C."/>
            <person name="Miller M.L."/>
            <person name="Jensen L.J."/>
            <person name="Gnad F."/>
            <person name="Cox J."/>
            <person name="Jensen T.S."/>
            <person name="Nigg E.A."/>
            <person name="Brunak S."/>
            <person name="Mann M."/>
        </authorList>
    </citation>
    <scope>PHOSPHORYLATION [LARGE SCALE ANALYSIS] AT SER-296; SER-335; SER-351 AND SER-482</scope>
    <scope>IDENTIFICATION BY MASS SPECTROMETRY [LARGE SCALE ANALYSIS]</scope>
    <source>
        <tissue>Cervix carcinoma</tissue>
    </source>
</reference>
<reference key="28">
    <citation type="journal article" date="2011" name="BMC Syst. Biol.">
        <title>Initial characterization of the human central proteome.</title>
        <authorList>
            <person name="Burkard T.R."/>
            <person name="Planyavsky M."/>
            <person name="Kaupe I."/>
            <person name="Breitwieser F.P."/>
            <person name="Buerckstuemmer T."/>
            <person name="Bennett K.L."/>
            <person name="Superti-Furga G."/>
            <person name="Colinge J."/>
        </authorList>
    </citation>
    <scope>IDENTIFICATION BY MASS SPECTROMETRY [LARGE SCALE ANALYSIS]</scope>
</reference>
<reference key="29">
    <citation type="journal article" date="2011" name="Sci. Signal.">
        <title>System-wide temporal characterization of the proteome and phosphoproteome of human embryonic stem cell differentiation.</title>
        <authorList>
            <person name="Rigbolt K.T."/>
            <person name="Prokhorova T.A."/>
            <person name="Akimov V."/>
            <person name="Henningsen J."/>
            <person name="Johansen P.T."/>
            <person name="Kratchmarova I."/>
            <person name="Kassem M."/>
            <person name="Mann M."/>
            <person name="Olsen J.V."/>
            <person name="Blagoev B."/>
        </authorList>
    </citation>
    <scope>PHOSPHORYLATION [LARGE SCALE ANALYSIS] AT SER-296</scope>
    <scope>IDENTIFICATION BY MASS SPECTROMETRY [LARGE SCALE ANALYSIS]</scope>
</reference>
<reference key="30">
    <citation type="journal article" date="2013" name="J. Proteome Res.">
        <title>Toward a comprehensive characterization of a human cancer cell phosphoproteome.</title>
        <authorList>
            <person name="Zhou H."/>
            <person name="Di Palma S."/>
            <person name="Preisinger C."/>
            <person name="Peng M."/>
            <person name="Polat A.N."/>
            <person name="Heck A.J."/>
            <person name="Mohammed S."/>
        </authorList>
    </citation>
    <scope>PHOSPHORYLATION [LARGE SCALE ANALYSIS] AT SER-296; SER-299 AND SER-482</scope>
    <scope>IDENTIFICATION BY MASS SPECTROMETRY [LARGE SCALE ANALYSIS]</scope>
    <source>
        <tissue>Cervix carcinoma</tissue>
        <tissue>Erythroleukemia</tissue>
    </source>
</reference>
<reference key="31">
    <citation type="journal article" date="2014" name="J. Proteomics">
        <title>An enzyme assisted RP-RPLC approach for in-depth analysis of human liver phosphoproteome.</title>
        <authorList>
            <person name="Bian Y."/>
            <person name="Song C."/>
            <person name="Cheng K."/>
            <person name="Dong M."/>
            <person name="Wang F."/>
            <person name="Huang J."/>
            <person name="Sun D."/>
            <person name="Wang L."/>
            <person name="Ye M."/>
            <person name="Zou H."/>
        </authorList>
    </citation>
    <scope>PHOSPHORYLATION [LARGE SCALE ANALYSIS] AT SER-296 AND SER-298</scope>
    <scope>IDENTIFICATION BY MASS SPECTROMETRY [LARGE SCALE ANALYSIS]</scope>
    <source>
        <tissue>Liver</tissue>
    </source>
</reference>
<reference key="32">
    <citation type="submission" date="2005-11" db="PDB data bank">
        <title>Solution structure of the SH3 domain of the CDC42-interacting protein 4.</title>
        <authorList>
            <consortium name="RIKEN structural genomics initiative (RSGI)"/>
        </authorList>
    </citation>
    <scope>STRUCTURE BY NMR OF 543-599</scope>
</reference>
<reference key="33">
    <citation type="journal article" date="2007" name="Cell">
        <title>Curved EFC/F-BAR-domain dimers are joined end to end into a filament for membrane invagination in endocytosis.</title>
        <authorList>
            <person name="Shimada A."/>
            <person name="Niwa H."/>
            <person name="Tsujita K."/>
            <person name="Suetsugu S."/>
            <person name="Nitta K."/>
            <person name="Hanawa-Suetsugu K."/>
            <person name="Akasaka R."/>
            <person name="Nishino Y."/>
            <person name="Toyama M."/>
            <person name="Chen L."/>
            <person name="Liu Z.-J."/>
            <person name="Wang B.C."/>
            <person name="Yamamoto M."/>
            <person name="Terada T."/>
            <person name="Miyazawa A."/>
            <person name="Tanaka A."/>
            <person name="Sugano S."/>
            <person name="Shirouzu M."/>
            <person name="Nagayama K."/>
            <person name="Takenawa T."/>
            <person name="Yokoyama S."/>
        </authorList>
    </citation>
    <scope>X-RAY CRYSTALLOGRAPHY (2.3 ANGSTROMS) OF 10-303</scope>
    <scope>DOMAIN F-BAR</scope>
    <scope>COILED-COIL DOMAIN</scope>
    <scope>SUBUNIT</scope>
</reference>
<reference key="34">
    <citation type="journal article" date="2009" name="J. Biomol. NMR">
        <title>The NMR structure of the TC10- and Cdc42-interacting domain of CIP4.</title>
        <authorList>
            <person name="Kobashigawa Y."/>
            <person name="Kumeta H."/>
            <person name="Kanoh D."/>
            <person name="Inagaki F."/>
        </authorList>
    </citation>
    <scope>STRUCTURE BY NMR OF 388-481</scope>
    <scope>COILED-COIL DOMAIN</scope>
</reference>
<keyword id="KW-0002">3D-structure</keyword>
<keyword id="KW-0025">Alternative splicing</keyword>
<keyword id="KW-1003">Cell membrane</keyword>
<keyword id="KW-0966">Cell projection</keyword>
<keyword id="KW-0175">Coiled coil</keyword>
<keyword id="KW-0963">Cytoplasm</keyword>
<keyword id="KW-0206">Cytoskeleton</keyword>
<keyword id="KW-0254">Endocytosis</keyword>
<keyword id="KW-0333">Golgi apparatus</keyword>
<keyword id="KW-0446">Lipid-binding</keyword>
<keyword id="KW-0458">Lysosome</keyword>
<keyword id="KW-0472">Membrane</keyword>
<keyword id="KW-0597">Phosphoprotein</keyword>
<keyword id="KW-1267">Proteomics identification</keyword>
<keyword id="KW-1185">Reference proteome</keyword>
<keyword id="KW-0728">SH3 domain</keyword>
<proteinExistence type="evidence at protein level"/>
<organism>
    <name type="scientific">Homo sapiens</name>
    <name type="common">Human</name>
    <dbReference type="NCBI Taxonomy" id="9606"/>
    <lineage>
        <taxon>Eukaryota</taxon>
        <taxon>Metazoa</taxon>
        <taxon>Chordata</taxon>
        <taxon>Craniata</taxon>
        <taxon>Vertebrata</taxon>
        <taxon>Euteleostomi</taxon>
        <taxon>Mammalia</taxon>
        <taxon>Eutheria</taxon>
        <taxon>Euarchontoglires</taxon>
        <taxon>Primates</taxon>
        <taxon>Haplorrhini</taxon>
        <taxon>Catarrhini</taxon>
        <taxon>Hominidae</taxon>
        <taxon>Homo</taxon>
    </lineage>
</organism>